<evidence type="ECO:0000255" key="1">
    <source>
        <dbReference type="HAMAP-Rule" id="MF_00758"/>
    </source>
</evidence>
<organism>
    <name type="scientific">Thiobacillus denitrificans (strain ATCC 25259 / T1)</name>
    <dbReference type="NCBI Taxonomy" id="292415"/>
    <lineage>
        <taxon>Bacteria</taxon>
        <taxon>Pseudomonadati</taxon>
        <taxon>Pseudomonadota</taxon>
        <taxon>Betaproteobacteria</taxon>
        <taxon>Nitrosomonadales</taxon>
        <taxon>Thiobacillaceae</taxon>
        <taxon>Thiobacillus</taxon>
    </lineage>
</organism>
<protein>
    <recommendedName>
        <fullName evidence="1">UPF0301 protein Tbd_2579</fullName>
    </recommendedName>
</protein>
<proteinExistence type="inferred from homology"/>
<name>Y2579_THIDA</name>
<keyword id="KW-1185">Reference proteome</keyword>
<reference key="1">
    <citation type="journal article" date="2006" name="J. Bacteriol.">
        <title>The genome sequence of the obligately chemolithoautotrophic, facultatively anaerobic bacterium Thiobacillus denitrificans.</title>
        <authorList>
            <person name="Beller H.R."/>
            <person name="Chain P.S."/>
            <person name="Letain T.E."/>
            <person name="Chakicherla A."/>
            <person name="Larimer F.W."/>
            <person name="Richardson P.M."/>
            <person name="Coleman M.A."/>
            <person name="Wood A.P."/>
            <person name="Kelly D.P."/>
        </authorList>
    </citation>
    <scope>NUCLEOTIDE SEQUENCE [LARGE SCALE GENOMIC DNA]</scope>
    <source>
        <strain>ATCC 25259 / T1</strain>
    </source>
</reference>
<comment type="similarity">
    <text evidence="1">Belongs to the UPF0301 (AlgH) family.</text>
</comment>
<feature type="chain" id="PRO_0000258888" description="UPF0301 protein Tbd_2579">
    <location>
        <begin position="1"/>
        <end position="185"/>
    </location>
</feature>
<gene>
    <name type="ordered locus">Tbd_2579</name>
</gene>
<sequence length="185" mass="19767">MENVNLTNHFLIAMPGMVDPNFNGTLTYICDHSDQGALGVVVNRPIDLDLSTLFEQIGLSLPEGLHGEIVYFGGPVQTERGFVLHTPPLTFSSTLTVNDAVSLTTSKDVLEAVSQGAGPEKFIVSLGYAGWSAGQLEDELKQNAWLSVAADPQVIFDLAPEERLPAAMKLLGIDFASLSDEAGHA</sequence>
<dbReference type="EMBL" id="CP000116">
    <property type="protein sequence ID" value="AAZ98532.1"/>
    <property type="molecule type" value="Genomic_DNA"/>
</dbReference>
<dbReference type="RefSeq" id="WP_011313091.1">
    <property type="nucleotide sequence ID" value="NC_007404.1"/>
</dbReference>
<dbReference type="SMR" id="Q3SFS4"/>
<dbReference type="STRING" id="292415.Tbd_2579"/>
<dbReference type="KEGG" id="tbd:Tbd_2579"/>
<dbReference type="eggNOG" id="COG1678">
    <property type="taxonomic scope" value="Bacteria"/>
</dbReference>
<dbReference type="HOGENOM" id="CLU_057596_1_0_4"/>
<dbReference type="OrthoDB" id="9807486at2"/>
<dbReference type="Proteomes" id="UP000008291">
    <property type="component" value="Chromosome"/>
</dbReference>
<dbReference type="GO" id="GO:0005829">
    <property type="term" value="C:cytosol"/>
    <property type="evidence" value="ECO:0007669"/>
    <property type="project" value="TreeGrafter"/>
</dbReference>
<dbReference type="Gene3D" id="3.40.1740.10">
    <property type="entry name" value="VC0467-like"/>
    <property type="match status" value="1"/>
</dbReference>
<dbReference type="HAMAP" id="MF_00758">
    <property type="entry name" value="UPF0301"/>
    <property type="match status" value="1"/>
</dbReference>
<dbReference type="InterPro" id="IPR003774">
    <property type="entry name" value="AlgH-like"/>
</dbReference>
<dbReference type="NCBIfam" id="NF001266">
    <property type="entry name" value="PRK00228.1-1"/>
    <property type="match status" value="1"/>
</dbReference>
<dbReference type="PANTHER" id="PTHR30327">
    <property type="entry name" value="UNCHARACTERIZED PROTEIN YQGE"/>
    <property type="match status" value="1"/>
</dbReference>
<dbReference type="PANTHER" id="PTHR30327:SF1">
    <property type="entry name" value="UPF0301 PROTEIN YQGE"/>
    <property type="match status" value="1"/>
</dbReference>
<dbReference type="Pfam" id="PF02622">
    <property type="entry name" value="DUF179"/>
    <property type="match status" value="1"/>
</dbReference>
<dbReference type="SUPFAM" id="SSF143456">
    <property type="entry name" value="VC0467-like"/>
    <property type="match status" value="1"/>
</dbReference>
<accession>Q3SFS4</accession>